<proteinExistence type="inferred from homology"/>
<dbReference type="EMBL" id="CP001402">
    <property type="protein sequence ID" value="ACR42162.1"/>
    <property type="molecule type" value="Genomic_DNA"/>
</dbReference>
<dbReference type="RefSeq" id="WP_012711557.1">
    <property type="nucleotide sequence ID" value="NC_012726.1"/>
</dbReference>
<dbReference type="SMR" id="C4KHU8"/>
<dbReference type="KEGG" id="sid:M164_1561"/>
<dbReference type="HOGENOM" id="CLU_069688_2_2_2"/>
<dbReference type="Proteomes" id="UP000001479">
    <property type="component" value="Chromosome"/>
</dbReference>
<dbReference type="GO" id="GO:0005886">
    <property type="term" value="C:plasma membrane"/>
    <property type="evidence" value="ECO:0007669"/>
    <property type="project" value="UniProtKB-SubCell"/>
</dbReference>
<dbReference type="GO" id="GO:0005524">
    <property type="term" value="F:ATP binding"/>
    <property type="evidence" value="ECO:0007669"/>
    <property type="project" value="UniProtKB-UniRule"/>
</dbReference>
<dbReference type="GO" id="GO:0046933">
    <property type="term" value="F:proton-transporting ATP synthase activity, rotational mechanism"/>
    <property type="evidence" value="ECO:0007669"/>
    <property type="project" value="UniProtKB-UniRule"/>
</dbReference>
<dbReference type="GO" id="GO:0046961">
    <property type="term" value="F:proton-transporting ATPase activity, rotational mechanism"/>
    <property type="evidence" value="ECO:0007669"/>
    <property type="project" value="InterPro"/>
</dbReference>
<dbReference type="GO" id="GO:0042777">
    <property type="term" value="P:proton motive force-driven plasma membrane ATP synthesis"/>
    <property type="evidence" value="ECO:0007669"/>
    <property type="project" value="UniProtKB-UniRule"/>
</dbReference>
<dbReference type="FunFam" id="1.10.287.3240:FF:000012">
    <property type="entry name" value="V-type ATP synthase subunit D"/>
    <property type="match status" value="1"/>
</dbReference>
<dbReference type="Gene3D" id="1.10.287.3240">
    <property type="match status" value="1"/>
</dbReference>
<dbReference type="HAMAP" id="MF_00271">
    <property type="entry name" value="ATP_synth_D_arch"/>
    <property type="match status" value="1"/>
</dbReference>
<dbReference type="InterPro" id="IPR002699">
    <property type="entry name" value="V_ATPase_D"/>
</dbReference>
<dbReference type="NCBIfam" id="NF001544">
    <property type="entry name" value="PRK00373.1-3"/>
    <property type="match status" value="1"/>
</dbReference>
<dbReference type="NCBIfam" id="TIGR00309">
    <property type="entry name" value="V_ATPase_subD"/>
    <property type="match status" value="1"/>
</dbReference>
<dbReference type="PANTHER" id="PTHR11671">
    <property type="entry name" value="V-TYPE ATP SYNTHASE SUBUNIT D"/>
    <property type="match status" value="1"/>
</dbReference>
<dbReference type="Pfam" id="PF01813">
    <property type="entry name" value="ATP-synt_D"/>
    <property type="match status" value="1"/>
</dbReference>
<keyword id="KW-0066">ATP synthesis</keyword>
<keyword id="KW-1003">Cell membrane</keyword>
<keyword id="KW-0375">Hydrogen ion transport</keyword>
<keyword id="KW-0406">Ion transport</keyword>
<keyword id="KW-0472">Membrane</keyword>
<keyword id="KW-0813">Transport</keyword>
<feature type="chain" id="PRO_1000209792" description="A-type ATP synthase subunit D">
    <location>
        <begin position="1"/>
        <end position="213"/>
    </location>
</feature>
<organism>
    <name type="scientific">Saccharolobus islandicus (strain M.16.4 / Kamchatka #3)</name>
    <name type="common">Sulfolobus islandicus</name>
    <dbReference type="NCBI Taxonomy" id="426118"/>
    <lineage>
        <taxon>Archaea</taxon>
        <taxon>Thermoproteota</taxon>
        <taxon>Thermoprotei</taxon>
        <taxon>Sulfolobales</taxon>
        <taxon>Sulfolobaceae</taxon>
        <taxon>Saccharolobus</taxon>
    </lineage>
</organism>
<protein>
    <recommendedName>
        <fullName evidence="1">A-type ATP synthase subunit D</fullName>
    </recommendedName>
</protein>
<comment type="function">
    <text evidence="1">Component of the A-type ATP synthase that produces ATP from ADP in the presence of a proton gradient across the membrane.</text>
</comment>
<comment type="subunit">
    <text evidence="1">Has multiple subunits with at least A(3), B(3), C, D, E, F, H, I and proteolipid K(x).</text>
</comment>
<comment type="subcellular location">
    <subcellularLocation>
        <location evidence="1">Cell membrane</location>
        <topology evidence="1">Peripheral membrane protein</topology>
    </subcellularLocation>
</comment>
<comment type="similarity">
    <text evidence="1">Belongs to the V-ATPase D subunit family.</text>
</comment>
<sequence>MSQKVLPTKINLIQFRRQLRLITVIKRLLENKREVLLLYLRTYASEYEKIYNEVNEEMKKVYESYLQAVASEGISNIEEIALSQKPSLEVSSSIKVIFGVKVPTIKLDKSTIPPKPFSDVETSPYLSESYEEMTEALNKIIELVELESTIRSLVSELRKTQRLINSIDNYILPFYRGSIKFIKQILEDRQREEFSRLKIIRRILQRRRESGSG</sequence>
<gene>
    <name evidence="1" type="primary">atpD</name>
    <name type="ordered locus">M164_1561</name>
</gene>
<reference key="1">
    <citation type="journal article" date="2009" name="Proc. Natl. Acad. Sci. U.S.A.">
        <title>Biogeography of the Sulfolobus islandicus pan-genome.</title>
        <authorList>
            <person name="Reno M.L."/>
            <person name="Held N.L."/>
            <person name="Fields C.J."/>
            <person name="Burke P.V."/>
            <person name="Whitaker R.J."/>
        </authorList>
    </citation>
    <scope>NUCLEOTIDE SEQUENCE [LARGE SCALE GENOMIC DNA]</scope>
    <source>
        <strain>M.16.4 / Kamchatka #3</strain>
    </source>
</reference>
<name>AATD_SACI6</name>
<evidence type="ECO:0000255" key="1">
    <source>
        <dbReference type="HAMAP-Rule" id="MF_00271"/>
    </source>
</evidence>
<accession>C4KHU8</accession>